<organism>
    <name type="scientific">Pseudomonas aeruginosa (strain UCBPP-PA14)</name>
    <dbReference type="NCBI Taxonomy" id="208963"/>
    <lineage>
        <taxon>Bacteria</taxon>
        <taxon>Pseudomonadati</taxon>
        <taxon>Pseudomonadota</taxon>
        <taxon>Gammaproteobacteria</taxon>
        <taxon>Pseudomonadales</taxon>
        <taxon>Pseudomonadaceae</taxon>
        <taxon>Pseudomonas</taxon>
    </lineage>
</organism>
<proteinExistence type="inferred from homology"/>
<evidence type="ECO:0000255" key="1">
    <source>
        <dbReference type="HAMAP-Rule" id="MF_00735"/>
    </source>
</evidence>
<accession>Q02FH0</accession>
<comment type="function">
    <text evidence="1">Methylates ribosomal protein L11.</text>
</comment>
<comment type="catalytic activity">
    <reaction evidence="1">
        <text>L-lysyl-[protein] + 3 S-adenosyl-L-methionine = N(6),N(6),N(6)-trimethyl-L-lysyl-[protein] + 3 S-adenosyl-L-homocysteine + 3 H(+)</text>
        <dbReference type="Rhea" id="RHEA:54192"/>
        <dbReference type="Rhea" id="RHEA-COMP:9752"/>
        <dbReference type="Rhea" id="RHEA-COMP:13826"/>
        <dbReference type="ChEBI" id="CHEBI:15378"/>
        <dbReference type="ChEBI" id="CHEBI:29969"/>
        <dbReference type="ChEBI" id="CHEBI:57856"/>
        <dbReference type="ChEBI" id="CHEBI:59789"/>
        <dbReference type="ChEBI" id="CHEBI:61961"/>
    </reaction>
</comment>
<comment type="subcellular location">
    <subcellularLocation>
        <location evidence="1">Cytoplasm</location>
    </subcellularLocation>
</comment>
<comment type="similarity">
    <text evidence="1">Belongs to the methyltransferase superfamily. PrmA family.</text>
</comment>
<reference key="1">
    <citation type="journal article" date="2006" name="Genome Biol.">
        <title>Genomic analysis reveals that Pseudomonas aeruginosa virulence is combinatorial.</title>
        <authorList>
            <person name="Lee D.G."/>
            <person name="Urbach J.M."/>
            <person name="Wu G."/>
            <person name="Liberati N.T."/>
            <person name="Feinbaum R.L."/>
            <person name="Miyata S."/>
            <person name="Diggins L.T."/>
            <person name="He J."/>
            <person name="Saucier M."/>
            <person name="Deziel E."/>
            <person name="Friedman L."/>
            <person name="Li L."/>
            <person name="Grills G."/>
            <person name="Montgomery K."/>
            <person name="Kucherlapati R."/>
            <person name="Rahme L.G."/>
            <person name="Ausubel F.M."/>
        </authorList>
    </citation>
    <scope>NUCLEOTIDE SEQUENCE [LARGE SCALE GENOMIC DNA]</scope>
    <source>
        <strain>UCBPP-PA14</strain>
    </source>
</reference>
<dbReference type="EC" id="2.1.1.-" evidence="1"/>
<dbReference type="EMBL" id="CP000438">
    <property type="protein sequence ID" value="ABJ14234.1"/>
    <property type="molecule type" value="Genomic_DNA"/>
</dbReference>
<dbReference type="RefSeq" id="WP_003112237.1">
    <property type="nucleotide sequence ID" value="NZ_CP034244.1"/>
</dbReference>
<dbReference type="SMR" id="Q02FH0"/>
<dbReference type="KEGG" id="pau:PA14_64140"/>
<dbReference type="PseudoCAP" id="PA14_64140"/>
<dbReference type="HOGENOM" id="CLU_049382_4_1_6"/>
<dbReference type="BioCyc" id="PAER208963:G1G74-5421-MONOMER"/>
<dbReference type="Proteomes" id="UP000000653">
    <property type="component" value="Chromosome"/>
</dbReference>
<dbReference type="GO" id="GO:0005829">
    <property type="term" value="C:cytosol"/>
    <property type="evidence" value="ECO:0007669"/>
    <property type="project" value="TreeGrafter"/>
</dbReference>
<dbReference type="GO" id="GO:0016279">
    <property type="term" value="F:protein-lysine N-methyltransferase activity"/>
    <property type="evidence" value="ECO:0007669"/>
    <property type="project" value="TreeGrafter"/>
</dbReference>
<dbReference type="GO" id="GO:0032259">
    <property type="term" value="P:methylation"/>
    <property type="evidence" value="ECO:0007669"/>
    <property type="project" value="UniProtKB-KW"/>
</dbReference>
<dbReference type="CDD" id="cd02440">
    <property type="entry name" value="AdoMet_MTases"/>
    <property type="match status" value="1"/>
</dbReference>
<dbReference type="Gene3D" id="3.40.50.150">
    <property type="entry name" value="Vaccinia Virus protein VP39"/>
    <property type="match status" value="1"/>
</dbReference>
<dbReference type="HAMAP" id="MF_00735">
    <property type="entry name" value="Methyltr_PrmA"/>
    <property type="match status" value="1"/>
</dbReference>
<dbReference type="InterPro" id="IPR050078">
    <property type="entry name" value="Ribosomal_L11_MeTrfase_PrmA"/>
</dbReference>
<dbReference type="InterPro" id="IPR004498">
    <property type="entry name" value="Ribosomal_PrmA_MeTrfase"/>
</dbReference>
<dbReference type="InterPro" id="IPR029063">
    <property type="entry name" value="SAM-dependent_MTases_sf"/>
</dbReference>
<dbReference type="NCBIfam" id="TIGR00406">
    <property type="entry name" value="prmA"/>
    <property type="match status" value="1"/>
</dbReference>
<dbReference type="PANTHER" id="PTHR43648">
    <property type="entry name" value="ELECTRON TRANSFER FLAVOPROTEIN BETA SUBUNIT LYSINE METHYLTRANSFERASE"/>
    <property type="match status" value="1"/>
</dbReference>
<dbReference type="PANTHER" id="PTHR43648:SF1">
    <property type="entry name" value="ELECTRON TRANSFER FLAVOPROTEIN BETA SUBUNIT LYSINE METHYLTRANSFERASE"/>
    <property type="match status" value="1"/>
</dbReference>
<dbReference type="Pfam" id="PF06325">
    <property type="entry name" value="PrmA"/>
    <property type="match status" value="1"/>
</dbReference>
<dbReference type="PIRSF" id="PIRSF000401">
    <property type="entry name" value="RPL11_MTase"/>
    <property type="match status" value="1"/>
</dbReference>
<dbReference type="SUPFAM" id="SSF53335">
    <property type="entry name" value="S-adenosyl-L-methionine-dependent methyltransferases"/>
    <property type="match status" value="1"/>
</dbReference>
<feature type="chain" id="PRO_1000046065" description="Ribosomal protein L11 methyltransferase">
    <location>
        <begin position="1"/>
        <end position="294"/>
    </location>
</feature>
<feature type="binding site" evidence="1">
    <location>
        <position position="144"/>
    </location>
    <ligand>
        <name>S-adenosyl-L-methionine</name>
        <dbReference type="ChEBI" id="CHEBI:59789"/>
    </ligand>
</feature>
<feature type="binding site" evidence="1">
    <location>
        <position position="165"/>
    </location>
    <ligand>
        <name>S-adenosyl-L-methionine</name>
        <dbReference type="ChEBI" id="CHEBI:59789"/>
    </ligand>
</feature>
<feature type="binding site" evidence="1">
    <location>
        <position position="187"/>
    </location>
    <ligand>
        <name>S-adenosyl-L-methionine</name>
        <dbReference type="ChEBI" id="CHEBI:59789"/>
    </ligand>
</feature>
<feature type="binding site" evidence="1">
    <location>
        <position position="229"/>
    </location>
    <ligand>
        <name>S-adenosyl-L-methionine</name>
        <dbReference type="ChEBI" id="CHEBI:59789"/>
    </ligand>
</feature>
<keyword id="KW-0963">Cytoplasm</keyword>
<keyword id="KW-0489">Methyltransferase</keyword>
<keyword id="KW-0949">S-adenosyl-L-methionine</keyword>
<keyword id="KW-0808">Transferase</keyword>
<protein>
    <recommendedName>
        <fullName evidence="1">Ribosomal protein L11 methyltransferase</fullName>
        <shortName evidence="1">L11 Mtase</shortName>
        <ecNumber evidence="1">2.1.1.-</ecNumber>
    </recommendedName>
</protein>
<name>PRMA_PSEAB</name>
<sequence length="294" mass="32000">MPWLQVRLAITPEQAETYEDALLEVGAVSVTFMDAEDQPIFEPDLGTTPLWSRTHLLALFEADTDETALLAHLALLTGGDLPEHHVEEIADQDWERSWMDNFQPMRFGRRLWIVPSWHAAPEPDAVNLLLDPGLAFGTGTHPTTALCLEWLDGQELAGRQVLDFGCGSGILAIAALLLGAERAVGTDIDPQALEASRDNASRNGIEPARFPVYLPADLPQRQADVLVANILAGPLVSLAPQLTGLVRPGGLLALSGILAEQAEEVRAAYSAHFDLDPTAEREGWIRISGRRRAD</sequence>
<gene>
    <name evidence="1" type="primary">prmA</name>
    <name type="ordered locus">PA14_64140</name>
</gene>